<dbReference type="EC" id="6.3.5.3" evidence="1"/>
<dbReference type="EMBL" id="CP000494">
    <property type="protein sequence ID" value="ABQ37375.1"/>
    <property type="molecule type" value="Genomic_DNA"/>
</dbReference>
<dbReference type="RefSeq" id="WP_012045339.1">
    <property type="nucleotide sequence ID" value="NC_009485.1"/>
</dbReference>
<dbReference type="SMR" id="A5EMI1"/>
<dbReference type="STRING" id="288000.BBta_5401"/>
<dbReference type="KEGG" id="bbt:BBta_5401"/>
<dbReference type="eggNOG" id="COG0046">
    <property type="taxonomic scope" value="Bacteria"/>
</dbReference>
<dbReference type="HOGENOM" id="CLU_003100_0_1_5"/>
<dbReference type="OrthoDB" id="9804441at2"/>
<dbReference type="UniPathway" id="UPA00074">
    <property type="reaction ID" value="UER00128"/>
</dbReference>
<dbReference type="Proteomes" id="UP000000246">
    <property type="component" value="Chromosome"/>
</dbReference>
<dbReference type="GO" id="GO:0005737">
    <property type="term" value="C:cytoplasm"/>
    <property type="evidence" value="ECO:0007669"/>
    <property type="project" value="UniProtKB-SubCell"/>
</dbReference>
<dbReference type="GO" id="GO:0005524">
    <property type="term" value="F:ATP binding"/>
    <property type="evidence" value="ECO:0007669"/>
    <property type="project" value="UniProtKB-UniRule"/>
</dbReference>
<dbReference type="GO" id="GO:0000287">
    <property type="term" value="F:magnesium ion binding"/>
    <property type="evidence" value="ECO:0007669"/>
    <property type="project" value="UniProtKB-UniRule"/>
</dbReference>
<dbReference type="GO" id="GO:0004642">
    <property type="term" value="F:phosphoribosylformylglycinamidine synthase activity"/>
    <property type="evidence" value="ECO:0007669"/>
    <property type="project" value="UniProtKB-UniRule"/>
</dbReference>
<dbReference type="GO" id="GO:0006189">
    <property type="term" value="P:'de novo' IMP biosynthetic process"/>
    <property type="evidence" value="ECO:0007669"/>
    <property type="project" value="UniProtKB-UniRule"/>
</dbReference>
<dbReference type="CDD" id="cd02203">
    <property type="entry name" value="PurL_repeat1"/>
    <property type="match status" value="1"/>
</dbReference>
<dbReference type="CDD" id="cd02204">
    <property type="entry name" value="PurL_repeat2"/>
    <property type="match status" value="1"/>
</dbReference>
<dbReference type="FunFam" id="3.30.1330.10:FF:000004">
    <property type="entry name" value="Phosphoribosylformylglycinamidine synthase subunit PurL"/>
    <property type="match status" value="1"/>
</dbReference>
<dbReference type="Gene3D" id="3.90.650.10">
    <property type="entry name" value="PurM-like C-terminal domain"/>
    <property type="match status" value="2"/>
</dbReference>
<dbReference type="Gene3D" id="3.30.1330.10">
    <property type="entry name" value="PurM-like, N-terminal domain"/>
    <property type="match status" value="2"/>
</dbReference>
<dbReference type="HAMAP" id="MF_00420">
    <property type="entry name" value="PurL_2"/>
    <property type="match status" value="1"/>
</dbReference>
<dbReference type="InterPro" id="IPR010074">
    <property type="entry name" value="PRibForGlyAmidine_synth_PurL"/>
</dbReference>
<dbReference type="InterPro" id="IPR041609">
    <property type="entry name" value="PurL_linker"/>
</dbReference>
<dbReference type="InterPro" id="IPR010918">
    <property type="entry name" value="PurM-like_C_dom"/>
</dbReference>
<dbReference type="InterPro" id="IPR036676">
    <property type="entry name" value="PurM-like_C_sf"/>
</dbReference>
<dbReference type="InterPro" id="IPR016188">
    <property type="entry name" value="PurM-like_N"/>
</dbReference>
<dbReference type="InterPro" id="IPR036921">
    <property type="entry name" value="PurM-like_N_sf"/>
</dbReference>
<dbReference type="NCBIfam" id="TIGR01736">
    <property type="entry name" value="FGAM_synth_II"/>
    <property type="match status" value="1"/>
</dbReference>
<dbReference type="NCBIfam" id="NF002290">
    <property type="entry name" value="PRK01213.1"/>
    <property type="match status" value="1"/>
</dbReference>
<dbReference type="PANTHER" id="PTHR43555">
    <property type="entry name" value="PHOSPHORIBOSYLFORMYLGLYCINAMIDINE SYNTHASE SUBUNIT PURL"/>
    <property type="match status" value="1"/>
</dbReference>
<dbReference type="PANTHER" id="PTHR43555:SF1">
    <property type="entry name" value="PHOSPHORIBOSYLFORMYLGLYCINAMIDINE SYNTHASE SUBUNIT PURL"/>
    <property type="match status" value="1"/>
</dbReference>
<dbReference type="Pfam" id="PF00586">
    <property type="entry name" value="AIRS"/>
    <property type="match status" value="2"/>
</dbReference>
<dbReference type="Pfam" id="PF02769">
    <property type="entry name" value="AIRS_C"/>
    <property type="match status" value="2"/>
</dbReference>
<dbReference type="Pfam" id="PF18072">
    <property type="entry name" value="FGAR-AT_linker"/>
    <property type="match status" value="1"/>
</dbReference>
<dbReference type="PIRSF" id="PIRSF001587">
    <property type="entry name" value="FGAM_synthase_II"/>
    <property type="match status" value="1"/>
</dbReference>
<dbReference type="SUPFAM" id="SSF56042">
    <property type="entry name" value="PurM C-terminal domain-like"/>
    <property type="match status" value="2"/>
</dbReference>
<dbReference type="SUPFAM" id="SSF55326">
    <property type="entry name" value="PurM N-terminal domain-like"/>
    <property type="match status" value="2"/>
</dbReference>
<accession>A5EMI1</accession>
<reference key="1">
    <citation type="journal article" date="2007" name="Science">
        <title>Legumes symbioses: absence of nod genes in photosynthetic bradyrhizobia.</title>
        <authorList>
            <person name="Giraud E."/>
            <person name="Moulin L."/>
            <person name="Vallenet D."/>
            <person name="Barbe V."/>
            <person name="Cytryn E."/>
            <person name="Avarre J.-C."/>
            <person name="Jaubert M."/>
            <person name="Simon D."/>
            <person name="Cartieaux F."/>
            <person name="Prin Y."/>
            <person name="Bena G."/>
            <person name="Hannibal L."/>
            <person name="Fardoux J."/>
            <person name="Kojadinovic M."/>
            <person name="Vuillet L."/>
            <person name="Lajus A."/>
            <person name="Cruveiller S."/>
            <person name="Rouy Z."/>
            <person name="Mangenot S."/>
            <person name="Segurens B."/>
            <person name="Dossat C."/>
            <person name="Franck W.L."/>
            <person name="Chang W.-S."/>
            <person name="Saunders E."/>
            <person name="Bruce D."/>
            <person name="Richardson P."/>
            <person name="Normand P."/>
            <person name="Dreyfus B."/>
            <person name="Pignol D."/>
            <person name="Stacey G."/>
            <person name="Emerich D."/>
            <person name="Vermeglio A."/>
            <person name="Medigue C."/>
            <person name="Sadowsky M."/>
        </authorList>
    </citation>
    <scope>NUCLEOTIDE SEQUENCE [LARGE SCALE GENOMIC DNA]</scope>
    <source>
        <strain>BTAi1 / ATCC BAA-1182</strain>
    </source>
</reference>
<proteinExistence type="inferred from homology"/>
<feature type="chain" id="PRO_1000050299" description="Phosphoribosylformylglycinamidine synthase subunit PurL">
    <location>
        <begin position="1"/>
        <end position="735"/>
    </location>
</feature>
<feature type="active site" evidence="1">
    <location>
        <position position="48"/>
    </location>
</feature>
<feature type="active site" description="Proton acceptor" evidence="1">
    <location>
        <position position="94"/>
    </location>
</feature>
<feature type="binding site" evidence="1">
    <location>
        <position position="51"/>
    </location>
    <ligand>
        <name>ATP</name>
        <dbReference type="ChEBI" id="CHEBI:30616"/>
    </ligand>
</feature>
<feature type="binding site" evidence="1">
    <location>
        <position position="90"/>
    </location>
    <ligand>
        <name>ATP</name>
        <dbReference type="ChEBI" id="CHEBI:30616"/>
    </ligand>
</feature>
<feature type="binding site" evidence="1">
    <location>
        <position position="92"/>
    </location>
    <ligand>
        <name>Mg(2+)</name>
        <dbReference type="ChEBI" id="CHEBI:18420"/>
        <label>1</label>
    </ligand>
</feature>
<feature type="binding site" evidence="1">
    <location>
        <begin position="93"/>
        <end position="96"/>
    </location>
    <ligand>
        <name>substrate</name>
    </ligand>
</feature>
<feature type="binding site" evidence="1">
    <location>
        <position position="115"/>
    </location>
    <ligand>
        <name>substrate</name>
    </ligand>
</feature>
<feature type="binding site" evidence="1">
    <location>
        <position position="116"/>
    </location>
    <ligand>
        <name>Mg(2+)</name>
        <dbReference type="ChEBI" id="CHEBI:18420"/>
        <label>2</label>
    </ligand>
</feature>
<feature type="binding site" evidence="1">
    <location>
        <position position="239"/>
    </location>
    <ligand>
        <name>substrate</name>
    </ligand>
</feature>
<feature type="binding site" evidence="1">
    <location>
        <position position="267"/>
    </location>
    <ligand>
        <name>Mg(2+)</name>
        <dbReference type="ChEBI" id="CHEBI:18420"/>
        <label>2</label>
    </ligand>
</feature>
<feature type="binding site" evidence="1">
    <location>
        <begin position="311"/>
        <end position="313"/>
    </location>
    <ligand>
        <name>substrate</name>
    </ligand>
</feature>
<feature type="binding site" evidence="1">
    <location>
        <position position="492"/>
    </location>
    <ligand>
        <name>ATP</name>
        <dbReference type="ChEBI" id="CHEBI:30616"/>
    </ligand>
</feature>
<feature type="binding site" evidence="1">
    <location>
        <position position="529"/>
    </location>
    <ligand>
        <name>ATP</name>
        <dbReference type="ChEBI" id="CHEBI:30616"/>
    </ligand>
</feature>
<feature type="binding site" evidence="1">
    <location>
        <position position="530"/>
    </location>
    <ligand>
        <name>Mg(2+)</name>
        <dbReference type="ChEBI" id="CHEBI:18420"/>
        <label>1</label>
    </ligand>
</feature>
<feature type="binding site" evidence="1">
    <location>
        <position position="532"/>
    </location>
    <ligand>
        <name>substrate</name>
    </ligand>
</feature>
<name>PURL_BRASB</name>
<organism>
    <name type="scientific">Bradyrhizobium sp. (strain BTAi1 / ATCC BAA-1182)</name>
    <dbReference type="NCBI Taxonomy" id="288000"/>
    <lineage>
        <taxon>Bacteria</taxon>
        <taxon>Pseudomonadati</taxon>
        <taxon>Pseudomonadota</taxon>
        <taxon>Alphaproteobacteria</taxon>
        <taxon>Hyphomicrobiales</taxon>
        <taxon>Nitrobacteraceae</taxon>
        <taxon>Bradyrhizobium</taxon>
    </lineage>
</organism>
<evidence type="ECO:0000255" key="1">
    <source>
        <dbReference type="HAMAP-Rule" id="MF_00420"/>
    </source>
</evidence>
<comment type="function">
    <text evidence="1">Part of the phosphoribosylformylglycinamidine synthase complex involved in the purines biosynthetic pathway. Catalyzes the ATP-dependent conversion of formylglycinamide ribonucleotide (FGAR) and glutamine to yield formylglycinamidine ribonucleotide (FGAM) and glutamate. The FGAM synthase complex is composed of three subunits. PurQ produces an ammonia molecule by converting glutamine to glutamate. PurL transfers the ammonia molecule to FGAR to form FGAM in an ATP-dependent manner. PurS interacts with PurQ and PurL and is thought to assist in the transfer of the ammonia molecule from PurQ to PurL.</text>
</comment>
<comment type="catalytic activity">
    <reaction evidence="1">
        <text>N(2)-formyl-N(1)-(5-phospho-beta-D-ribosyl)glycinamide + L-glutamine + ATP + H2O = 2-formamido-N(1)-(5-O-phospho-beta-D-ribosyl)acetamidine + L-glutamate + ADP + phosphate + H(+)</text>
        <dbReference type="Rhea" id="RHEA:17129"/>
        <dbReference type="ChEBI" id="CHEBI:15377"/>
        <dbReference type="ChEBI" id="CHEBI:15378"/>
        <dbReference type="ChEBI" id="CHEBI:29985"/>
        <dbReference type="ChEBI" id="CHEBI:30616"/>
        <dbReference type="ChEBI" id="CHEBI:43474"/>
        <dbReference type="ChEBI" id="CHEBI:58359"/>
        <dbReference type="ChEBI" id="CHEBI:147286"/>
        <dbReference type="ChEBI" id="CHEBI:147287"/>
        <dbReference type="ChEBI" id="CHEBI:456216"/>
        <dbReference type="EC" id="6.3.5.3"/>
    </reaction>
</comment>
<comment type="pathway">
    <text evidence="1">Purine metabolism; IMP biosynthesis via de novo pathway; 5-amino-1-(5-phospho-D-ribosyl)imidazole from N(2)-formyl-N(1)-(5-phospho-D-ribosyl)glycinamide: step 1/2.</text>
</comment>
<comment type="subunit">
    <text evidence="1">Monomer. Part of the FGAM synthase complex composed of 1 PurL, 1 PurQ and 2 PurS subunits.</text>
</comment>
<comment type="subcellular location">
    <subcellularLocation>
        <location evidence="1">Cytoplasm</location>
    </subcellularLocation>
</comment>
<comment type="similarity">
    <text evidence="1">Belongs to the FGAMS family.</text>
</comment>
<keyword id="KW-0067">ATP-binding</keyword>
<keyword id="KW-0963">Cytoplasm</keyword>
<keyword id="KW-0436">Ligase</keyword>
<keyword id="KW-0460">Magnesium</keyword>
<keyword id="KW-0479">Metal-binding</keyword>
<keyword id="KW-0547">Nucleotide-binding</keyword>
<keyword id="KW-0658">Purine biosynthesis</keyword>
<keyword id="KW-1185">Reference proteome</keyword>
<gene>
    <name evidence="1" type="primary">purL</name>
    <name type="ordered locus">BBta_5401</name>
</gene>
<sequence length="735" mass="78068">MRNEPQITPDLVAAHGLKPDEYERILKLIGRVPTFTELGIFSAMWNEHCSYKSSRIHLRGLPTKAPWVIQGPGENAGVIDIGDGQAVVFKMESHNHPSYIEPYQGATTGVGGILRDVFTMGARPIACLNALSFGAPEHPKTRHLVSGVVAGIGGYGNSFGVPTVGGQTRFHTRYDGNILVNAMAVGLADADKIFYAAASGVNMPIVYLGSKTGRDGIHGASMASAEFDDSSEEKRPTVQVGDPFAEKLLLEACLEIMAADCVIAIQDMGAAGLTCSAVEMGAKGDLGVDLDLDAVPTRETGMSAYEMMLSESQERMLMVLKPEKEKEAEAIFRKWGLDFAVVGYTTPSKRFVVKHGGDVMADLPIKELGDEAPLYDRPHVASPALPVIHAREVKAPMDIIPALEKLIATPDLCSKRWIWEQYDHVILGNTVQRPGGDAAVVRVQDGPKGLALTVDVTPRYCEADPYQGGMQAVAEAWRNITAVGGRPLAITDNLNFGNPERPEIMGQFVGCLKGISEACRALDFPVVSGNVSLYNETNGRAILPTPSIGGVGLLDDFTKSASIAFEAEGEAILLIGETHGWLGQSVYLRDVCGREEGAPPPVDLAAEKRIGDVVRGMIHAGTATAAHDLSDGGLLVALAEMAMASGIGARLLAAPASIVPHAYWFGEDQARYLVTVPETEAGRVLAKMRGAGVPCTRIGTTGGSALAIAGEASVEVTTLKTRFESWLPGYMGGAA</sequence>
<protein>
    <recommendedName>
        <fullName evidence="1">Phosphoribosylformylglycinamidine synthase subunit PurL</fullName>
        <shortName evidence="1">FGAM synthase</shortName>
        <ecNumber evidence="1">6.3.5.3</ecNumber>
    </recommendedName>
    <alternativeName>
        <fullName evidence="1">Formylglycinamide ribonucleotide amidotransferase subunit II</fullName>
        <shortName evidence="1">FGAR amidotransferase II</shortName>
        <shortName evidence="1">FGAR-AT II</shortName>
    </alternativeName>
    <alternativeName>
        <fullName evidence="1">Glutamine amidotransferase PurL</fullName>
    </alternativeName>
    <alternativeName>
        <fullName evidence="1">Phosphoribosylformylglycinamidine synthase subunit II</fullName>
    </alternativeName>
</protein>